<gene>
    <name evidence="1" type="primary">atpF</name>
    <name type="ordered locus">plu0044</name>
</gene>
<organism>
    <name type="scientific">Photorhabdus laumondii subsp. laumondii (strain DSM 15139 / CIP 105565 / TT01)</name>
    <name type="common">Photorhabdus luminescens subsp. laumondii</name>
    <dbReference type="NCBI Taxonomy" id="243265"/>
    <lineage>
        <taxon>Bacteria</taxon>
        <taxon>Pseudomonadati</taxon>
        <taxon>Pseudomonadota</taxon>
        <taxon>Gammaproteobacteria</taxon>
        <taxon>Enterobacterales</taxon>
        <taxon>Morganellaceae</taxon>
        <taxon>Photorhabdus</taxon>
    </lineage>
</organism>
<evidence type="ECO:0000255" key="1">
    <source>
        <dbReference type="HAMAP-Rule" id="MF_01398"/>
    </source>
</evidence>
<keyword id="KW-0066">ATP synthesis</keyword>
<keyword id="KW-0997">Cell inner membrane</keyword>
<keyword id="KW-1003">Cell membrane</keyword>
<keyword id="KW-0138">CF(0)</keyword>
<keyword id="KW-0375">Hydrogen ion transport</keyword>
<keyword id="KW-0406">Ion transport</keyword>
<keyword id="KW-0472">Membrane</keyword>
<keyword id="KW-1185">Reference proteome</keyword>
<keyword id="KW-0812">Transmembrane</keyword>
<keyword id="KW-1133">Transmembrane helix</keyword>
<keyword id="KW-0813">Transport</keyword>
<comment type="function">
    <text evidence="1">F(1)F(0) ATP synthase produces ATP from ADP in the presence of a proton or sodium gradient. F-type ATPases consist of two structural domains, F(1) containing the extramembraneous catalytic core and F(0) containing the membrane proton channel, linked together by a central stalk and a peripheral stalk. During catalysis, ATP synthesis in the catalytic domain of F(1) is coupled via a rotary mechanism of the central stalk subunits to proton translocation.</text>
</comment>
<comment type="function">
    <text evidence="1">Component of the F(0) channel, it forms part of the peripheral stalk, linking F(1) to F(0).</text>
</comment>
<comment type="subunit">
    <text evidence="1">F-type ATPases have 2 components, F(1) - the catalytic core - and F(0) - the membrane proton channel. F(1) has five subunits: alpha(3), beta(3), gamma(1), delta(1), epsilon(1). F(0) has three main subunits: a(1), b(2) and c(10-14). The alpha and beta chains form an alternating ring which encloses part of the gamma chain. F(1) is attached to F(0) by a central stalk formed by the gamma and epsilon chains, while a peripheral stalk is formed by the delta and b chains.</text>
</comment>
<comment type="subcellular location">
    <subcellularLocation>
        <location evidence="1">Cell inner membrane</location>
        <topology evidence="1">Single-pass membrane protein</topology>
    </subcellularLocation>
</comment>
<comment type="similarity">
    <text evidence="1">Belongs to the ATPase B chain family.</text>
</comment>
<feature type="chain" id="PRO_0000368657" description="ATP synthase subunit b">
    <location>
        <begin position="1"/>
        <end position="156"/>
    </location>
</feature>
<feature type="transmembrane region" description="Helical" evidence="1">
    <location>
        <begin position="11"/>
        <end position="31"/>
    </location>
</feature>
<sequence length="156" mass="17349">MNINATILGQAIAFVLFVMFCMKFVWPPIMAAIEKRQKEIADGLSSAERAKKDLDLAQANATDQMKKAKVEAQVIIEQANKQKAQILDDAKAEAEQERNRIVTQAQAEIDAERKRAREELRKQVAMLAIAGAEKIIERSVDEAANSDIVDKLVAEL</sequence>
<proteinExistence type="inferred from homology"/>
<name>ATPF_PHOLL</name>
<protein>
    <recommendedName>
        <fullName evidence="1">ATP synthase subunit b</fullName>
    </recommendedName>
    <alternativeName>
        <fullName evidence="1">ATP synthase F(0) sector subunit b</fullName>
    </alternativeName>
    <alternativeName>
        <fullName evidence="1">ATPase subunit I</fullName>
    </alternativeName>
    <alternativeName>
        <fullName evidence="1">F-type ATPase subunit b</fullName>
        <shortName evidence="1">F-ATPase subunit b</shortName>
    </alternativeName>
</protein>
<accession>Q7NA90</accession>
<reference key="1">
    <citation type="journal article" date="2003" name="Nat. Biotechnol.">
        <title>The genome sequence of the entomopathogenic bacterium Photorhabdus luminescens.</title>
        <authorList>
            <person name="Duchaud E."/>
            <person name="Rusniok C."/>
            <person name="Frangeul L."/>
            <person name="Buchrieser C."/>
            <person name="Givaudan A."/>
            <person name="Taourit S."/>
            <person name="Bocs S."/>
            <person name="Boursaux-Eude C."/>
            <person name="Chandler M."/>
            <person name="Charles J.-F."/>
            <person name="Dassa E."/>
            <person name="Derose R."/>
            <person name="Derzelle S."/>
            <person name="Freyssinet G."/>
            <person name="Gaudriault S."/>
            <person name="Medigue C."/>
            <person name="Lanois A."/>
            <person name="Powell K."/>
            <person name="Siguier P."/>
            <person name="Vincent R."/>
            <person name="Wingate V."/>
            <person name="Zouine M."/>
            <person name="Glaser P."/>
            <person name="Boemare N."/>
            <person name="Danchin A."/>
            <person name="Kunst F."/>
        </authorList>
    </citation>
    <scope>NUCLEOTIDE SEQUENCE [LARGE SCALE GENOMIC DNA]</scope>
    <source>
        <strain>DSM 15139 / CIP 105565 / TT01</strain>
    </source>
</reference>
<dbReference type="EMBL" id="BX571859">
    <property type="protein sequence ID" value="CAE12339.1"/>
    <property type="molecule type" value="Genomic_DNA"/>
</dbReference>
<dbReference type="RefSeq" id="WP_011144457.1">
    <property type="nucleotide sequence ID" value="NC_005126.1"/>
</dbReference>
<dbReference type="SMR" id="Q7NA90"/>
<dbReference type="STRING" id="243265.plu0044"/>
<dbReference type="GeneID" id="88807992"/>
<dbReference type="KEGG" id="plu:plu0044"/>
<dbReference type="eggNOG" id="COG0711">
    <property type="taxonomic scope" value="Bacteria"/>
</dbReference>
<dbReference type="HOGENOM" id="CLU_079215_4_5_6"/>
<dbReference type="OrthoDB" id="9788020at2"/>
<dbReference type="Proteomes" id="UP000002514">
    <property type="component" value="Chromosome"/>
</dbReference>
<dbReference type="GO" id="GO:0005886">
    <property type="term" value="C:plasma membrane"/>
    <property type="evidence" value="ECO:0007669"/>
    <property type="project" value="UniProtKB-SubCell"/>
</dbReference>
<dbReference type="GO" id="GO:0045259">
    <property type="term" value="C:proton-transporting ATP synthase complex"/>
    <property type="evidence" value="ECO:0007669"/>
    <property type="project" value="UniProtKB-KW"/>
</dbReference>
<dbReference type="GO" id="GO:0046933">
    <property type="term" value="F:proton-transporting ATP synthase activity, rotational mechanism"/>
    <property type="evidence" value="ECO:0007669"/>
    <property type="project" value="UniProtKB-UniRule"/>
</dbReference>
<dbReference type="GO" id="GO:0046961">
    <property type="term" value="F:proton-transporting ATPase activity, rotational mechanism"/>
    <property type="evidence" value="ECO:0007669"/>
    <property type="project" value="TreeGrafter"/>
</dbReference>
<dbReference type="CDD" id="cd06503">
    <property type="entry name" value="ATP-synt_Fo_b"/>
    <property type="match status" value="1"/>
</dbReference>
<dbReference type="Gene3D" id="6.10.250.1580">
    <property type="match status" value="1"/>
</dbReference>
<dbReference type="HAMAP" id="MF_01398">
    <property type="entry name" value="ATP_synth_b_bprime"/>
    <property type="match status" value="1"/>
</dbReference>
<dbReference type="InterPro" id="IPR028987">
    <property type="entry name" value="ATP_synth_B-like_membr_sf"/>
</dbReference>
<dbReference type="InterPro" id="IPR002146">
    <property type="entry name" value="ATP_synth_b/b'su_bac/chlpt"/>
</dbReference>
<dbReference type="InterPro" id="IPR005864">
    <property type="entry name" value="ATP_synth_F0_bsu_bac"/>
</dbReference>
<dbReference type="InterPro" id="IPR050059">
    <property type="entry name" value="ATP_synthase_B_chain"/>
</dbReference>
<dbReference type="NCBIfam" id="TIGR01144">
    <property type="entry name" value="ATP_synt_b"/>
    <property type="match status" value="1"/>
</dbReference>
<dbReference type="NCBIfam" id="NF004411">
    <property type="entry name" value="PRK05759.1-2"/>
    <property type="match status" value="1"/>
</dbReference>
<dbReference type="NCBIfam" id="NF004413">
    <property type="entry name" value="PRK05759.1-4"/>
    <property type="match status" value="1"/>
</dbReference>
<dbReference type="PANTHER" id="PTHR33445:SF1">
    <property type="entry name" value="ATP SYNTHASE SUBUNIT B"/>
    <property type="match status" value="1"/>
</dbReference>
<dbReference type="PANTHER" id="PTHR33445">
    <property type="entry name" value="ATP SYNTHASE SUBUNIT B', CHLOROPLASTIC"/>
    <property type="match status" value="1"/>
</dbReference>
<dbReference type="Pfam" id="PF00430">
    <property type="entry name" value="ATP-synt_B"/>
    <property type="match status" value="1"/>
</dbReference>
<dbReference type="SUPFAM" id="SSF81573">
    <property type="entry name" value="F1F0 ATP synthase subunit B, membrane domain"/>
    <property type="match status" value="1"/>
</dbReference>